<proteinExistence type="inferred from homology"/>
<feature type="chain" id="PRO_0000322270" description="Small ribosomal subunit protein uS4">
    <location>
        <begin position="1"/>
        <end position="205"/>
    </location>
</feature>
<feature type="domain" description="S4 RNA-binding" evidence="1">
    <location>
        <begin position="94"/>
        <end position="154"/>
    </location>
</feature>
<feature type="region of interest" description="Disordered" evidence="2">
    <location>
        <begin position="18"/>
        <end position="46"/>
    </location>
</feature>
<organism>
    <name type="scientific">Bradyrhizobium sp. (strain ORS 278)</name>
    <dbReference type="NCBI Taxonomy" id="114615"/>
    <lineage>
        <taxon>Bacteria</taxon>
        <taxon>Pseudomonadati</taxon>
        <taxon>Pseudomonadota</taxon>
        <taxon>Alphaproteobacteria</taxon>
        <taxon>Hyphomicrobiales</taxon>
        <taxon>Nitrobacteraceae</taxon>
        <taxon>Bradyrhizobium</taxon>
    </lineage>
</organism>
<sequence length="205" mass="23442">MTKRSEAKYKIDRRMGQNIWGRPKSPVNRREYGPGQHGQRRKGKLSDFGVQLRAKQKLKGYYANISERQFHGIYVEAGRLKGDTGENLIGILERRLDTVVFRAKFVSTMFAARQFINHGHIKVNGRKVNIASYQVKPGDVIEVKEASKQLAVVLEATQLAERDVPDYIEADHSKMTAKFIRIPALSDVPFAVQMEPHLIVEFYSR</sequence>
<keyword id="KW-1185">Reference proteome</keyword>
<keyword id="KW-0687">Ribonucleoprotein</keyword>
<keyword id="KW-0689">Ribosomal protein</keyword>
<keyword id="KW-0694">RNA-binding</keyword>
<keyword id="KW-0699">rRNA-binding</keyword>
<reference key="1">
    <citation type="journal article" date="2007" name="Science">
        <title>Legumes symbioses: absence of nod genes in photosynthetic bradyrhizobia.</title>
        <authorList>
            <person name="Giraud E."/>
            <person name="Moulin L."/>
            <person name="Vallenet D."/>
            <person name="Barbe V."/>
            <person name="Cytryn E."/>
            <person name="Avarre J.-C."/>
            <person name="Jaubert M."/>
            <person name="Simon D."/>
            <person name="Cartieaux F."/>
            <person name="Prin Y."/>
            <person name="Bena G."/>
            <person name="Hannibal L."/>
            <person name="Fardoux J."/>
            <person name="Kojadinovic M."/>
            <person name="Vuillet L."/>
            <person name="Lajus A."/>
            <person name="Cruveiller S."/>
            <person name="Rouy Z."/>
            <person name="Mangenot S."/>
            <person name="Segurens B."/>
            <person name="Dossat C."/>
            <person name="Franck W.L."/>
            <person name="Chang W.-S."/>
            <person name="Saunders E."/>
            <person name="Bruce D."/>
            <person name="Richardson P."/>
            <person name="Normand P."/>
            <person name="Dreyfus B."/>
            <person name="Pignol D."/>
            <person name="Stacey G."/>
            <person name="Emerich D."/>
            <person name="Vermeglio A."/>
            <person name="Medigue C."/>
            <person name="Sadowsky M."/>
        </authorList>
    </citation>
    <scope>NUCLEOTIDE SEQUENCE [LARGE SCALE GENOMIC DNA]</scope>
    <source>
        <strain>ORS 278</strain>
    </source>
</reference>
<dbReference type="EMBL" id="CU234118">
    <property type="protein sequence ID" value="CAL76608.1"/>
    <property type="molecule type" value="Genomic_DNA"/>
</dbReference>
<dbReference type="RefSeq" id="WP_011925811.1">
    <property type="nucleotide sequence ID" value="NC_009445.1"/>
</dbReference>
<dbReference type="SMR" id="A4YRT2"/>
<dbReference type="STRING" id="114615.BRADO2798"/>
<dbReference type="KEGG" id="bra:BRADO2798"/>
<dbReference type="eggNOG" id="COG0522">
    <property type="taxonomic scope" value="Bacteria"/>
</dbReference>
<dbReference type="HOGENOM" id="CLU_092403_0_0_5"/>
<dbReference type="OrthoDB" id="9803672at2"/>
<dbReference type="Proteomes" id="UP000001994">
    <property type="component" value="Chromosome"/>
</dbReference>
<dbReference type="GO" id="GO:0015935">
    <property type="term" value="C:small ribosomal subunit"/>
    <property type="evidence" value="ECO:0007669"/>
    <property type="project" value="InterPro"/>
</dbReference>
<dbReference type="GO" id="GO:0019843">
    <property type="term" value="F:rRNA binding"/>
    <property type="evidence" value="ECO:0007669"/>
    <property type="project" value="UniProtKB-UniRule"/>
</dbReference>
<dbReference type="GO" id="GO:0003735">
    <property type="term" value="F:structural constituent of ribosome"/>
    <property type="evidence" value="ECO:0007669"/>
    <property type="project" value="InterPro"/>
</dbReference>
<dbReference type="GO" id="GO:0042274">
    <property type="term" value="P:ribosomal small subunit biogenesis"/>
    <property type="evidence" value="ECO:0007669"/>
    <property type="project" value="TreeGrafter"/>
</dbReference>
<dbReference type="GO" id="GO:0006412">
    <property type="term" value="P:translation"/>
    <property type="evidence" value="ECO:0007669"/>
    <property type="project" value="UniProtKB-UniRule"/>
</dbReference>
<dbReference type="CDD" id="cd00165">
    <property type="entry name" value="S4"/>
    <property type="match status" value="1"/>
</dbReference>
<dbReference type="FunFam" id="3.10.290.10:FF:000001">
    <property type="entry name" value="30S ribosomal protein S4"/>
    <property type="match status" value="1"/>
</dbReference>
<dbReference type="Gene3D" id="1.10.1050.10">
    <property type="entry name" value="Ribosomal Protein S4 Delta 41, Chain A, domain 1"/>
    <property type="match status" value="1"/>
</dbReference>
<dbReference type="Gene3D" id="3.10.290.10">
    <property type="entry name" value="RNA-binding S4 domain"/>
    <property type="match status" value="1"/>
</dbReference>
<dbReference type="HAMAP" id="MF_01306_B">
    <property type="entry name" value="Ribosomal_uS4_B"/>
    <property type="match status" value="1"/>
</dbReference>
<dbReference type="InterPro" id="IPR022801">
    <property type="entry name" value="Ribosomal_uS4"/>
</dbReference>
<dbReference type="InterPro" id="IPR005709">
    <property type="entry name" value="Ribosomal_uS4_bac-type"/>
</dbReference>
<dbReference type="InterPro" id="IPR018079">
    <property type="entry name" value="Ribosomal_uS4_CS"/>
</dbReference>
<dbReference type="InterPro" id="IPR001912">
    <property type="entry name" value="Ribosomal_uS4_N"/>
</dbReference>
<dbReference type="InterPro" id="IPR002942">
    <property type="entry name" value="S4_RNA-bd"/>
</dbReference>
<dbReference type="InterPro" id="IPR036986">
    <property type="entry name" value="S4_RNA-bd_sf"/>
</dbReference>
<dbReference type="NCBIfam" id="NF003717">
    <property type="entry name" value="PRK05327.1"/>
    <property type="match status" value="1"/>
</dbReference>
<dbReference type="NCBIfam" id="TIGR01017">
    <property type="entry name" value="rpsD_bact"/>
    <property type="match status" value="1"/>
</dbReference>
<dbReference type="PANTHER" id="PTHR11831">
    <property type="entry name" value="30S 40S RIBOSOMAL PROTEIN"/>
    <property type="match status" value="1"/>
</dbReference>
<dbReference type="PANTHER" id="PTHR11831:SF4">
    <property type="entry name" value="SMALL RIBOSOMAL SUBUNIT PROTEIN US4M"/>
    <property type="match status" value="1"/>
</dbReference>
<dbReference type="Pfam" id="PF00163">
    <property type="entry name" value="Ribosomal_S4"/>
    <property type="match status" value="1"/>
</dbReference>
<dbReference type="Pfam" id="PF01479">
    <property type="entry name" value="S4"/>
    <property type="match status" value="1"/>
</dbReference>
<dbReference type="SMART" id="SM01390">
    <property type="entry name" value="Ribosomal_S4"/>
    <property type="match status" value="1"/>
</dbReference>
<dbReference type="SMART" id="SM00363">
    <property type="entry name" value="S4"/>
    <property type="match status" value="1"/>
</dbReference>
<dbReference type="SUPFAM" id="SSF55174">
    <property type="entry name" value="Alpha-L RNA-binding motif"/>
    <property type="match status" value="1"/>
</dbReference>
<dbReference type="PROSITE" id="PS00632">
    <property type="entry name" value="RIBOSOMAL_S4"/>
    <property type="match status" value="1"/>
</dbReference>
<dbReference type="PROSITE" id="PS50889">
    <property type="entry name" value="S4"/>
    <property type="match status" value="1"/>
</dbReference>
<evidence type="ECO:0000255" key="1">
    <source>
        <dbReference type="HAMAP-Rule" id="MF_01306"/>
    </source>
</evidence>
<evidence type="ECO:0000256" key="2">
    <source>
        <dbReference type="SAM" id="MobiDB-lite"/>
    </source>
</evidence>
<evidence type="ECO:0000305" key="3"/>
<gene>
    <name evidence="1" type="primary">rpsD</name>
    <name type="ordered locus">BRADO2798</name>
</gene>
<protein>
    <recommendedName>
        <fullName evidence="1">Small ribosomal subunit protein uS4</fullName>
    </recommendedName>
    <alternativeName>
        <fullName evidence="3">30S ribosomal protein S4</fullName>
    </alternativeName>
</protein>
<accession>A4YRT2</accession>
<comment type="function">
    <text evidence="1">One of the primary rRNA binding proteins, it binds directly to 16S rRNA where it nucleates assembly of the body of the 30S subunit.</text>
</comment>
<comment type="function">
    <text evidence="1">With S5 and S12 plays an important role in translational accuracy.</text>
</comment>
<comment type="subunit">
    <text evidence="1">Part of the 30S ribosomal subunit. Contacts protein S5. The interaction surface between S4 and S5 is involved in control of translational fidelity.</text>
</comment>
<comment type="similarity">
    <text evidence="1">Belongs to the universal ribosomal protein uS4 family.</text>
</comment>
<name>RS4_BRASO</name>